<accession>Q8C7U1</accession>
<accession>A2AA64</accession>
<accession>Q3TDC7</accession>
<accession>Q3URT6</accession>
<accession>Q7TNR2</accession>
<accession>Q922W0</accession>
<accession>Q99J06</accession>
<sequence>MATTSGPAGIAMGSVGSLLERQDFSPEELRAALAGSRGSRQPDGLLRKGLGQREFFSYLHLPKKDGKTTKRAPRNEPDYATLYYREHPRAGDFSKTSLPERGRFDKCRIRPSVFKPPVGSGKGFLSMQSLAAHKGQKLWRSNGSLHTLACHPPLSPGPRASQARAQLLHALSLDEGGPEPSLSDSSSGGSFGRSPGTGPSPFSSSLGHINHLGGSLDRAPRSPKESGPLAVLSCLPEPPPPYEFSCPTTEEVAVLPEAREELKRDLGDQDVSNSFTQVLEERQRLWLSELKRLYVERLHEVAQKAERSERNLQLQLFMAQQEQRRLRKELRAQQGLAPEPRTSGSSMEADPNARPEEEARWEVCQKTAEISLLKQQLREAQAELAQKLAEIFSLKTQLRGSRAQAQAQDAELARLREAVHSLQEQAPREEAPGSCETDDCKSRGLLGEAGGSEAREGAEQLRAELLQERLRGQEQALRFEQERQTWQEEKERVLRYQREIQGSYMDMYRRNQALEHELRLLREPPTSWSPRLESSKI</sequence>
<evidence type="ECO:0000250" key="1">
    <source>
        <dbReference type="UniProtKB" id="A0A1L8GXY6"/>
    </source>
</evidence>
<evidence type="ECO:0000250" key="2">
    <source>
        <dbReference type="UniProtKB" id="O15049"/>
    </source>
</evidence>
<evidence type="ECO:0000250" key="3">
    <source>
        <dbReference type="UniProtKB" id="Q3LUD3"/>
    </source>
</evidence>
<evidence type="ECO:0000255" key="4"/>
<evidence type="ECO:0000256" key="5">
    <source>
        <dbReference type="SAM" id="MobiDB-lite"/>
    </source>
</evidence>
<evidence type="ECO:0000305" key="6"/>
<evidence type="ECO:0007744" key="7">
    <source>
    </source>
</evidence>
<gene>
    <name type="primary">N4bp3</name>
</gene>
<keyword id="KW-0966">Cell projection</keyword>
<keyword id="KW-0175">Coiled coil</keyword>
<keyword id="KW-0968">Cytoplasmic vesicle</keyword>
<keyword id="KW-0217">Developmental protein</keyword>
<keyword id="KW-0524">Neurogenesis</keyword>
<keyword id="KW-0597">Phosphoprotein</keyword>
<keyword id="KW-1185">Reference proteome</keyword>
<name>N4BP3_MOUSE</name>
<protein>
    <recommendedName>
        <fullName>NEDD4-binding protein 3</fullName>
        <shortName>N4BP3</shortName>
    </recommendedName>
</protein>
<comment type="function">
    <text evidence="1 2">Plays a positive role in the antiviral innate immune signaling pathway. Mechanistically, interacts with MAVS and functions as a positive regulator to promote 'Lys-63'-linked polyubiquitination of MAVS and thus strengthens the interaction between MAVS and TRAF2 (By similarity). Also plays a role in axon and dendrite arborization during cranial nerve development. May also be important for neural crest migration and early development of other anterior structures including eye, brain and cranial cartilage (By similarity).</text>
</comment>
<comment type="subunit">
    <text evidence="2">Binds NEDD4. Interacts with 14-3-3 proteins. Interacts with MAVS.</text>
</comment>
<comment type="subcellular location">
    <subcellularLocation>
        <location evidence="3">Cytoplasmic vesicle</location>
    </subcellularLocation>
    <subcellularLocation>
        <location evidence="3">Cell projection</location>
        <location evidence="3">Axon</location>
    </subcellularLocation>
    <subcellularLocation>
        <location evidence="3">Cell projection</location>
        <location evidence="3">Dendrite</location>
    </subcellularLocation>
    <text evidence="3">In developing neurons, accumulates in early growth cones and at branching points of axons and dendrites.</text>
</comment>
<comment type="similarity">
    <text evidence="6">Belongs to the N4BP3 family.</text>
</comment>
<reference key="1">
    <citation type="journal article" date="2005" name="Science">
        <title>The transcriptional landscape of the mammalian genome.</title>
        <authorList>
            <person name="Carninci P."/>
            <person name="Kasukawa T."/>
            <person name="Katayama S."/>
            <person name="Gough J."/>
            <person name="Frith M.C."/>
            <person name="Maeda N."/>
            <person name="Oyama R."/>
            <person name="Ravasi T."/>
            <person name="Lenhard B."/>
            <person name="Wells C."/>
            <person name="Kodzius R."/>
            <person name="Shimokawa K."/>
            <person name="Bajic V.B."/>
            <person name="Brenner S.E."/>
            <person name="Batalov S."/>
            <person name="Forrest A.R."/>
            <person name="Zavolan M."/>
            <person name="Davis M.J."/>
            <person name="Wilming L.G."/>
            <person name="Aidinis V."/>
            <person name="Allen J.E."/>
            <person name="Ambesi-Impiombato A."/>
            <person name="Apweiler R."/>
            <person name="Aturaliya R.N."/>
            <person name="Bailey T.L."/>
            <person name="Bansal M."/>
            <person name="Baxter L."/>
            <person name="Beisel K.W."/>
            <person name="Bersano T."/>
            <person name="Bono H."/>
            <person name="Chalk A.M."/>
            <person name="Chiu K.P."/>
            <person name="Choudhary V."/>
            <person name="Christoffels A."/>
            <person name="Clutterbuck D.R."/>
            <person name="Crowe M.L."/>
            <person name="Dalla E."/>
            <person name="Dalrymple B.P."/>
            <person name="de Bono B."/>
            <person name="Della Gatta G."/>
            <person name="di Bernardo D."/>
            <person name="Down T."/>
            <person name="Engstrom P."/>
            <person name="Fagiolini M."/>
            <person name="Faulkner G."/>
            <person name="Fletcher C.F."/>
            <person name="Fukushima T."/>
            <person name="Furuno M."/>
            <person name="Futaki S."/>
            <person name="Gariboldi M."/>
            <person name="Georgii-Hemming P."/>
            <person name="Gingeras T.R."/>
            <person name="Gojobori T."/>
            <person name="Green R.E."/>
            <person name="Gustincich S."/>
            <person name="Harbers M."/>
            <person name="Hayashi Y."/>
            <person name="Hensch T.K."/>
            <person name="Hirokawa N."/>
            <person name="Hill D."/>
            <person name="Huminiecki L."/>
            <person name="Iacono M."/>
            <person name="Ikeo K."/>
            <person name="Iwama A."/>
            <person name="Ishikawa T."/>
            <person name="Jakt M."/>
            <person name="Kanapin A."/>
            <person name="Katoh M."/>
            <person name="Kawasawa Y."/>
            <person name="Kelso J."/>
            <person name="Kitamura H."/>
            <person name="Kitano H."/>
            <person name="Kollias G."/>
            <person name="Krishnan S.P."/>
            <person name="Kruger A."/>
            <person name="Kummerfeld S.K."/>
            <person name="Kurochkin I.V."/>
            <person name="Lareau L.F."/>
            <person name="Lazarevic D."/>
            <person name="Lipovich L."/>
            <person name="Liu J."/>
            <person name="Liuni S."/>
            <person name="McWilliam S."/>
            <person name="Madan Babu M."/>
            <person name="Madera M."/>
            <person name="Marchionni L."/>
            <person name="Matsuda H."/>
            <person name="Matsuzawa S."/>
            <person name="Miki H."/>
            <person name="Mignone F."/>
            <person name="Miyake S."/>
            <person name="Morris K."/>
            <person name="Mottagui-Tabar S."/>
            <person name="Mulder N."/>
            <person name="Nakano N."/>
            <person name="Nakauchi H."/>
            <person name="Ng P."/>
            <person name="Nilsson R."/>
            <person name="Nishiguchi S."/>
            <person name="Nishikawa S."/>
            <person name="Nori F."/>
            <person name="Ohara O."/>
            <person name="Okazaki Y."/>
            <person name="Orlando V."/>
            <person name="Pang K.C."/>
            <person name="Pavan W.J."/>
            <person name="Pavesi G."/>
            <person name="Pesole G."/>
            <person name="Petrovsky N."/>
            <person name="Piazza S."/>
            <person name="Reed J."/>
            <person name="Reid J.F."/>
            <person name="Ring B.Z."/>
            <person name="Ringwald M."/>
            <person name="Rost B."/>
            <person name="Ruan Y."/>
            <person name="Salzberg S.L."/>
            <person name="Sandelin A."/>
            <person name="Schneider C."/>
            <person name="Schoenbach C."/>
            <person name="Sekiguchi K."/>
            <person name="Semple C.A."/>
            <person name="Seno S."/>
            <person name="Sessa L."/>
            <person name="Sheng Y."/>
            <person name="Shibata Y."/>
            <person name="Shimada H."/>
            <person name="Shimada K."/>
            <person name="Silva D."/>
            <person name="Sinclair B."/>
            <person name="Sperling S."/>
            <person name="Stupka E."/>
            <person name="Sugiura K."/>
            <person name="Sultana R."/>
            <person name="Takenaka Y."/>
            <person name="Taki K."/>
            <person name="Tammoja K."/>
            <person name="Tan S.L."/>
            <person name="Tang S."/>
            <person name="Taylor M.S."/>
            <person name="Tegner J."/>
            <person name="Teichmann S.A."/>
            <person name="Ueda H.R."/>
            <person name="van Nimwegen E."/>
            <person name="Verardo R."/>
            <person name="Wei C.L."/>
            <person name="Yagi K."/>
            <person name="Yamanishi H."/>
            <person name="Zabarovsky E."/>
            <person name="Zhu S."/>
            <person name="Zimmer A."/>
            <person name="Hide W."/>
            <person name="Bult C."/>
            <person name="Grimmond S.M."/>
            <person name="Teasdale R.D."/>
            <person name="Liu E.T."/>
            <person name="Brusic V."/>
            <person name="Quackenbush J."/>
            <person name="Wahlestedt C."/>
            <person name="Mattick J.S."/>
            <person name="Hume D.A."/>
            <person name="Kai C."/>
            <person name="Sasaki D."/>
            <person name="Tomaru Y."/>
            <person name="Fukuda S."/>
            <person name="Kanamori-Katayama M."/>
            <person name="Suzuki M."/>
            <person name="Aoki J."/>
            <person name="Arakawa T."/>
            <person name="Iida J."/>
            <person name="Imamura K."/>
            <person name="Itoh M."/>
            <person name="Kato T."/>
            <person name="Kawaji H."/>
            <person name="Kawagashira N."/>
            <person name="Kawashima T."/>
            <person name="Kojima M."/>
            <person name="Kondo S."/>
            <person name="Konno H."/>
            <person name="Nakano K."/>
            <person name="Ninomiya N."/>
            <person name="Nishio T."/>
            <person name="Okada M."/>
            <person name="Plessy C."/>
            <person name="Shibata K."/>
            <person name="Shiraki T."/>
            <person name="Suzuki S."/>
            <person name="Tagami M."/>
            <person name="Waki K."/>
            <person name="Watahiki A."/>
            <person name="Okamura-Oho Y."/>
            <person name="Suzuki H."/>
            <person name="Kawai J."/>
            <person name="Hayashizaki Y."/>
        </authorList>
    </citation>
    <scope>NUCLEOTIDE SEQUENCE [LARGE SCALE MRNA]</scope>
    <source>
        <strain>C57BL/6J</strain>
        <strain>NOD</strain>
        <tissue>Dendritic cell</tissue>
        <tissue>Embryonic stem cell</tissue>
        <tissue>Embryonic stomach</tissue>
    </source>
</reference>
<reference key="2">
    <citation type="journal article" date="2009" name="PLoS Biol.">
        <title>Lineage-specific biology revealed by a finished genome assembly of the mouse.</title>
        <authorList>
            <person name="Church D.M."/>
            <person name="Goodstadt L."/>
            <person name="Hillier L.W."/>
            <person name="Zody M.C."/>
            <person name="Goldstein S."/>
            <person name="She X."/>
            <person name="Bult C.J."/>
            <person name="Agarwala R."/>
            <person name="Cherry J.L."/>
            <person name="DiCuccio M."/>
            <person name="Hlavina W."/>
            <person name="Kapustin Y."/>
            <person name="Meric P."/>
            <person name="Maglott D."/>
            <person name="Birtle Z."/>
            <person name="Marques A.C."/>
            <person name="Graves T."/>
            <person name="Zhou S."/>
            <person name="Teague B."/>
            <person name="Potamousis K."/>
            <person name="Churas C."/>
            <person name="Place M."/>
            <person name="Herschleb J."/>
            <person name="Runnheim R."/>
            <person name="Forrest D."/>
            <person name="Amos-Landgraf J."/>
            <person name="Schwartz D.C."/>
            <person name="Cheng Z."/>
            <person name="Lindblad-Toh K."/>
            <person name="Eichler E.E."/>
            <person name="Ponting C.P."/>
        </authorList>
    </citation>
    <scope>NUCLEOTIDE SEQUENCE [LARGE SCALE GENOMIC DNA]</scope>
    <source>
        <strain>C57BL/6J</strain>
    </source>
</reference>
<reference key="3">
    <citation type="submission" date="2005-09" db="EMBL/GenBank/DDBJ databases">
        <authorList>
            <person name="Mural R.J."/>
            <person name="Adams M.D."/>
            <person name="Myers E.W."/>
            <person name="Smith H.O."/>
            <person name="Venter J.C."/>
        </authorList>
    </citation>
    <scope>NUCLEOTIDE SEQUENCE [LARGE SCALE GENOMIC DNA]</scope>
</reference>
<reference key="4">
    <citation type="journal article" date="2004" name="Genome Res.">
        <title>The status, quality, and expansion of the NIH full-length cDNA project: the Mammalian Gene Collection (MGC).</title>
        <authorList>
            <consortium name="The MGC Project Team"/>
        </authorList>
    </citation>
    <scope>NUCLEOTIDE SEQUENCE [LARGE SCALE MRNA]</scope>
    <source>
        <strain>FVB/N</strain>
        <tissue>Mammary tumor</tissue>
        <tissue>Salivary gland</tissue>
    </source>
</reference>
<reference key="5">
    <citation type="journal article" date="2010" name="Cell">
        <title>A tissue-specific atlas of mouse protein phosphorylation and expression.</title>
        <authorList>
            <person name="Huttlin E.L."/>
            <person name="Jedrychowski M.P."/>
            <person name="Elias J.E."/>
            <person name="Goswami T."/>
            <person name="Rad R."/>
            <person name="Beausoleil S.A."/>
            <person name="Villen J."/>
            <person name="Haas W."/>
            <person name="Sowa M.E."/>
            <person name="Gygi S.P."/>
        </authorList>
    </citation>
    <scope>PHOSPHORYLATION [LARGE SCALE ANALYSIS] AT SER-172</scope>
    <scope>IDENTIFICATION BY MASS SPECTROMETRY [LARGE SCALE ANALYSIS]</scope>
    <source>
        <tissue>Kidney</tissue>
    </source>
</reference>
<dbReference type="EMBL" id="AK049249">
    <property type="protein sequence ID" value="BAC33636.1"/>
    <property type="molecule type" value="mRNA"/>
</dbReference>
<dbReference type="EMBL" id="AK141228">
    <property type="protein sequence ID" value="BAE24601.1"/>
    <property type="molecule type" value="mRNA"/>
</dbReference>
<dbReference type="EMBL" id="AK142500">
    <property type="protein sequence ID" value="BAE25088.1"/>
    <property type="molecule type" value="mRNA"/>
</dbReference>
<dbReference type="EMBL" id="AK170270">
    <property type="protein sequence ID" value="BAE41675.1"/>
    <property type="molecule type" value="mRNA"/>
</dbReference>
<dbReference type="EMBL" id="AK170521">
    <property type="protein sequence ID" value="BAE41855.1"/>
    <property type="molecule type" value="mRNA"/>
</dbReference>
<dbReference type="EMBL" id="AL645602">
    <property type="status" value="NOT_ANNOTATED_CDS"/>
    <property type="molecule type" value="Genomic_DNA"/>
</dbReference>
<dbReference type="EMBL" id="CH466575">
    <property type="protein sequence ID" value="EDL33646.1"/>
    <property type="molecule type" value="Genomic_DNA"/>
</dbReference>
<dbReference type="EMBL" id="CH466575">
    <property type="protein sequence ID" value="EDL33647.1"/>
    <property type="molecule type" value="Genomic_DNA"/>
</dbReference>
<dbReference type="EMBL" id="CH466575">
    <property type="protein sequence ID" value="EDL33648.1"/>
    <property type="molecule type" value="Genomic_DNA"/>
</dbReference>
<dbReference type="EMBL" id="BC005767">
    <property type="protein sequence ID" value="AAH05767.1"/>
    <property type="molecule type" value="mRNA"/>
</dbReference>
<dbReference type="EMBL" id="BC006740">
    <property type="protein sequence ID" value="AAH06740.2"/>
    <property type="molecule type" value="mRNA"/>
</dbReference>
<dbReference type="EMBL" id="BC055831">
    <property type="protein sequence ID" value="AAH55831.2"/>
    <property type="molecule type" value="mRNA"/>
</dbReference>
<dbReference type="CCDS" id="CCDS24657.1"/>
<dbReference type="RefSeq" id="NP_001405098.1">
    <property type="nucleotide sequence ID" value="NM_001418169.1"/>
</dbReference>
<dbReference type="RefSeq" id="NP_666086.2">
    <property type="nucleotide sequence ID" value="NM_145974.3"/>
</dbReference>
<dbReference type="RefSeq" id="XP_006532827.1">
    <property type="nucleotide sequence ID" value="XM_006532764.3"/>
</dbReference>
<dbReference type="RefSeq" id="XP_006532828.1">
    <property type="nucleotide sequence ID" value="XM_006532765.5"/>
</dbReference>
<dbReference type="RefSeq" id="XP_006532829.1">
    <property type="nucleotide sequence ID" value="XM_006532766.3"/>
</dbReference>
<dbReference type="RefSeq" id="XP_030101617.1">
    <property type="nucleotide sequence ID" value="XM_030245757.1"/>
</dbReference>
<dbReference type="SMR" id="Q8C7U1"/>
<dbReference type="BioGRID" id="229350">
    <property type="interactions" value="2"/>
</dbReference>
<dbReference type="FunCoup" id="Q8C7U1">
    <property type="interactions" value="103"/>
</dbReference>
<dbReference type="IntAct" id="Q8C7U1">
    <property type="interactions" value="1"/>
</dbReference>
<dbReference type="STRING" id="10090.ENSMUSP00000001080"/>
<dbReference type="iPTMnet" id="Q8C7U1"/>
<dbReference type="PhosphoSitePlus" id="Q8C7U1"/>
<dbReference type="PaxDb" id="10090-ENSMUSP00000001080"/>
<dbReference type="PeptideAtlas" id="Q8C7U1"/>
<dbReference type="ProteomicsDB" id="252635"/>
<dbReference type="Antibodypedia" id="29410">
    <property type="antibodies" value="81 antibodies from 19 providers"/>
</dbReference>
<dbReference type="Ensembl" id="ENSMUST00000001080.16">
    <property type="protein sequence ID" value="ENSMUSP00000001080.10"/>
    <property type="gene ID" value="ENSMUSG00000001053.16"/>
</dbReference>
<dbReference type="GeneID" id="212706"/>
<dbReference type="KEGG" id="mmu:212706"/>
<dbReference type="UCSC" id="uc007iue.1">
    <property type="organism name" value="mouse"/>
</dbReference>
<dbReference type="AGR" id="MGI:2442218"/>
<dbReference type="CTD" id="23138"/>
<dbReference type="MGI" id="MGI:2442218">
    <property type="gene designation" value="N4bp3"/>
</dbReference>
<dbReference type="VEuPathDB" id="HostDB:ENSMUSG00000001053"/>
<dbReference type="eggNOG" id="ENOG502QVNK">
    <property type="taxonomic scope" value="Eukaryota"/>
</dbReference>
<dbReference type="GeneTree" id="ENSGT00940000158603"/>
<dbReference type="HOGENOM" id="CLU_026379_3_1_1"/>
<dbReference type="InParanoid" id="Q8C7U1"/>
<dbReference type="OMA" id="FSCKSMA"/>
<dbReference type="OrthoDB" id="10030037at2759"/>
<dbReference type="PhylomeDB" id="Q8C7U1"/>
<dbReference type="TreeFam" id="TF331420"/>
<dbReference type="BioGRID-ORCS" id="212706">
    <property type="hits" value="2 hits in 77 CRISPR screens"/>
</dbReference>
<dbReference type="ChiTaRS" id="N4bp3">
    <property type="organism name" value="mouse"/>
</dbReference>
<dbReference type="PRO" id="PR:Q8C7U1"/>
<dbReference type="Proteomes" id="UP000000589">
    <property type="component" value="Chromosome 11"/>
</dbReference>
<dbReference type="RNAct" id="Q8C7U1">
    <property type="molecule type" value="protein"/>
</dbReference>
<dbReference type="Bgee" id="ENSMUSG00000001053">
    <property type="expression patterns" value="Expressed in interventricular septum and 188 other cell types or tissues"/>
</dbReference>
<dbReference type="ExpressionAtlas" id="Q8C7U1">
    <property type="expression patterns" value="baseline and differential"/>
</dbReference>
<dbReference type="GO" id="GO:0030424">
    <property type="term" value="C:axon"/>
    <property type="evidence" value="ECO:0007669"/>
    <property type="project" value="UniProtKB-SubCell"/>
</dbReference>
<dbReference type="GO" id="GO:0031410">
    <property type="term" value="C:cytoplasmic vesicle"/>
    <property type="evidence" value="ECO:0000314"/>
    <property type="project" value="MGI"/>
</dbReference>
<dbReference type="GO" id="GO:0030425">
    <property type="term" value="C:dendrite"/>
    <property type="evidence" value="ECO:0007669"/>
    <property type="project" value="UniProtKB-SubCell"/>
</dbReference>
<dbReference type="GO" id="GO:0045087">
    <property type="term" value="P:innate immune response"/>
    <property type="evidence" value="ECO:0007669"/>
    <property type="project" value="Ensembl"/>
</dbReference>
<dbReference type="GO" id="GO:0007399">
    <property type="term" value="P:nervous system development"/>
    <property type="evidence" value="ECO:0007669"/>
    <property type="project" value="UniProtKB-KW"/>
</dbReference>
<dbReference type="InterPro" id="IPR033571">
    <property type="entry name" value="N4BP3"/>
</dbReference>
<dbReference type="PANTHER" id="PTHR32274">
    <property type="entry name" value="NEDD4-BINDING PROTEIN 3"/>
    <property type="match status" value="1"/>
</dbReference>
<dbReference type="PANTHER" id="PTHR32274:SF1">
    <property type="entry name" value="NEDD4-BINDING PROTEIN 3"/>
    <property type="match status" value="1"/>
</dbReference>
<dbReference type="Pfam" id="PF06818">
    <property type="entry name" value="Fez1"/>
    <property type="match status" value="2"/>
</dbReference>
<feature type="chain" id="PRO_0000096683" description="NEDD4-binding protein 3">
    <location>
        <begin position="1"/>
        <end position="537"/>
    </location>
</feature>
<feature type="region of interest" description="Disordered" evidence="5">
    <location>
        <begin position="173"/>
        <end position="234"/>
    </location>
</feature>
<feature type="region of interest" description="Disordered" evidence="5">
    <location>
        <begin position="328"/>
        <end position="361"/>
    </location>
</feature>
<feature type="region of interest" description="Disordered" evidence="5">
    <location>
        <begin position="423"/>
        <end position="458"/>
    </location>
</feature>
<feature type="coiled-coil region" evidence="4">
    <location>
        <begin position="295"/>
        <end position="501"/>
    </location>
</feature>
<feature type="compositionally biased region" description="Low complexity" evidence="5">
    <location>
        <begin position="178"/>
        <end position="207"/>
    </location>
</feature>
<feature type="compositionally biased region" description="Basic and acidic residues" evidence="5">
    <location>
        <begin position="351"/>
        <end position="361"/>
    </location>
</feature>
<feature type="modified residue" description="Phosphoserine" evidence="7">
    <location>
        <position position="172"/>
    </location>
</feature>
<feature type="sequence conflict" description="In Ref. 4; AAH06740." evidence="6" ref="4">
    <original>S</original>
    <variation>I</variation>
    <location>
        <position position="203"/>
    </location>
</feature>
<feature type="sequence conflict" description="In Ref. 1; BAE24601." evidence="6" ref="1">
    <original>S</original>
    <variation>G</variation>
    <location>
        <position position="233"/>
    </location>
</feature>
<feature type="sequence conflict" description="In Ref. 4; AAH05767." evidence="6" ref="4">
    <original>GS</original>
    <variation>HA</variation>
    <location>
        <begin position="344"/>
        <end position="345"/>
    </location>
</feature>
<feature type="sequence conflict" description="In Ref. 4; AAH05767." evidence="6" ref="4">
    <original>M</original>
    <variation>V</variation>
    <location>
        <position position="347"/>
    </location>
</feature>
<feature type="sequence conflict" description="In Ref. 1; BAE24601." evidence="6" ref="1">
    <original>V</original>
    <variation>A</variation>
    <location>
        <position position="493"/>
    </location>
</feature>
<feature type="sequence conflict" description="In Ref. 1; BAE24601." evidence="6" ref="1">
    <original>M</original>
    <variation>R</variation>
    <location>
        <position position="505"/>
    </location>
</feature>
<proteinExistence type="evidence at protein level"/>
<organism>
    <name type="scientific">Mus musculus</name>
    <name type="common">Mouse</name>
    <dbReference type="NCBI Taxonomy" id="10090"/>
    <lineage>
        <taxon>Eukaryota</taxon>
        <taxon>Metazoa</taxon>
        <taxon>Chordata</taxon>
        <taxon>Craniata</taxon>
        <taxon>Vertebrata</taxon>
        <taxon>Euteleostomi</taxon>
        <taxon>Mammalia</taxon>
        <taxon>Eutheria</taxon>
        <taxon>Euarchontoglires</taxon>
        <taxon>Glires</taxon>
        <taxon>Rodentia</taxon>
        <taxon>Myomorpha</taxon>
        <taxon>Muroidea</taxon>
        <taxon>Muridae</taxon>
        <taxon>Murinae</taxon>
        <taxon>Mus</taxon>
        <taxon>Mus</taxon>
    </lineage>
</organism>